<name>CYB_URSTH</name>
<evidence type="ECO:0000250" key="1"/>
<evidence type="ECO:0000250" key="2">
    <source>
        <dbReference type="UniProtKB" id="P00157"/>
    </source>
</evidence>
<evidence type="ECO:0000255" key="3">
    <source>
        <dbReference type="PROSITE-ProRule" id="PRU00967"/>
    </source>
</evidence>
<evidence type="ECO:0000255" key="4">
    <source>
        <dbReference type="PROSITE-ProRule" id="PRU00968"/>
    </source>
</evidence>
<evidence type="ECO:0000305" key="5"/>
<gene>
    <name type="primary">MT-CYB</name>
    <name type="synonym">COB</name>
    <name type="synonym">CYTB</name>
    <name type="synonym">MTCYB</name>
</gene>
<feature type="chain" id="PRO_0000061706" description="Cytochrome b">
    <location>
        <begin position="1"/>
        <end position="379"/>
    </location>
</feature>
<feature type="transmembrane region" description="Helical" evidence="2">
    <location>
        <begin position="33"/>
        <end position="53"/>
    </location>
</feature>
<feature type="transmembrane region" description="Helical" evidence="2">
    <location>
        <begin position="77"/>
        <end position="98"/>
    </location>
</feature>
<feature type="transmembrane region" description="Helical" evidence="2">
    <location>
        <begin position="113"/>
        <end position="133"/>
    </location>
</feature>
<feature type="transmembrane region" description="Helical" evidence="2">
    <location>
        <begin position="178"/>
        <end position="198"/>
    </location>
</feature>
<feature type="transmembrane region" description="Helical" evidence="2">
    <location>
        <begin position="226"/>
        <end position="246"/>
    </location>
</feature>
<feature type="transmembrane region" description="Helical" evidence="2">
    <location>
        <begin position="288"/>
        <end position="308"/>
    </location>
</feature>
<feature type="transmembrane region" description="Helical" evidence="2">
    <location>
        <begin position="320"/>
        <end position="340"/>
    </location>
</feature>
<feature type="transmembrane region" description="Helical" evidence="2">
    <location>
        <begin position="347"/>
        <end position="367"/>
    </location>
</feature>
<feature type="binding site" description="axial binding residue" evidence="2">
    <location>
        <position position="83"/>
    </location>
    <ligand>
        <name>heme b</name>
        <dbReference type="ChEBI" id="CHEBI:60344"/>
        <label>b562</label>
    </ligand>
    <ligandPart>
        <name>Fe</name>
        <dbReference type="ChEBI" id="CHEBI:18248"/>
    </ligandPart>
</feature>
<feature type="binding site" description="axial binding residue" evidence="2">
    <location>
        <position position="97"/>
    </location>
    <ligand>
        <name>heme b</name>
        <dbReference type="ChEBI" id="CHEBI:60344"/>
        <label>b566</label>
    </ligand>
    <ligandPart>
        <name>Fe</name>
        <dbReference type="ChEBI" id="CHEBI:18248"/>
    </ligandPart>
</feature>
<feature type="binding site" description="axial binding residue" evidence="2">
    <location>
        <position position="182"/>
    </location>
    <ligand>
        <name>heme b</name>
        <dbReference type="ChEBI" id="CHEBI:60344"/>
        <label>b562</label>
    </ligand>
    <ligandPart>
        <name>Fe</name>
        <dbReference type="ChEBI" id="CHEBI:18248"/>
    </ligandPart>
</feature>
<feature type="binding site" description="axial binding residue" evidence="2">
    <location>
        <position position="196"/>
    </location>
    <ligand>
        <name>heme b</name>
        <dbReference type="ChEBI" id="CHEBI:60344"/>
        <label>b566</label>
    </ligand>
    <ligandPart>
        <name>Fe</name>
        <dbReference type="ChEBI" id="CHEBI:18248"/>
    </ligandPart>
</feature>
<feature type="binding site" evidence="2">
    <location>
        <position position="201"/>
    </location>
    <ligand>
        <name>a ubiquinone</name>
        <dbReference type="ChEBI" id="CHEBI:16389"/>
    </ligand>
</feature>
<feature type="sequence conflict" description="In Ref. 2; BAA77670." evidence="5" ref="2">
    <original>R</original>
    <variation>W</variation>
    <location>
        <position position="5"/>
    </location>
</feature>
<feature type="sequence conflict" description="In Ref. 2; BAA77670." evidence="5" ref="2">
    <original>M</original>
    <variation>V</variation>
    <location>
        <position position="39"/>
    </location>
</feature>
<feature type="sequence conflict" description="In Ref. 2; BAA77670." evidence="5" ref="2">
    <original>I</original>
    <variation>V</variation>
    <location>
        <position position="42"/>
    </location>
</feature>
<feature type="sequence conflict" description="In Ref. 2; BAA77670." evidence="5" ref="2">
    <original>I</original>
    <variation>V</variation>
    <location>
        <position position="118"/>
    </location>
</feature>
<feature type="sequence conflict" description="In Ref. 2; BAA77670." evidence="5" ref="2">
    <original>D</original>
    <variation>N</variation>
    <location>
        <position position="214"/>
    </location>
</feature>
<feature type="sequence conflict" description="In Ref. 2; BAA77670." evidence="5" ref="2">
    <original>I</original>
    <variation>F</variation>
    <location>
        <position position="303"/>
    </location>
</feature>
<reference key="1">
    <citation type="journal article" date="1996" name="Mol. Phylogenet. Evol.">
        <title>A phylogeny of the bears (Ursidae) inferred from complete sequences of three mitochondrial genes.</title>
        <authorList>
            <person name="Talbot S.L."/>
            <person name="Shields G.F."/>
        </authorList>
    </citation>
    <scope>NUCLEOTIDE SEQUENCE [GENOMIC DNA]</scope>
</reference>
<reference key="2">
    <citation type="journal article" date="1999" name="Mol. Biol. Evol.">
        <title>Microevolution of the mitochondrial DNA control region in the Japanese brown bear (Ursus arctos) population.</title>
        <authorList>
            <person name="Matsuhashi T."/>
            <person name="Masuda R."/>
            <person name="Mano T."/>
            <person name="Yoshida M.C."/>
        </authorList>
    </citation>
    <scope>NUCLEOTIDE SEQUENCE [GENOMIC DNA]</scope>
    <source>
        <strain>Isolate STH-01</strain>
    </source>
</reference>
<organism>
    <name type="scientific">Ursus thibetanus</name>
    <name type="common">Asiatic black bear</name>
    <name type="synonym">Selenarctos thibetanus</name>
    <dbReference type="NCBI Taxonomy" id="9642"/>
    <lineage>
        <taxon>Eukaryota</taxon>
        <taxon>Metazoa</taxon>
        <taxon>Chordata</taxon>
        <taxon>Craniata</taxon>
        <taxon>Vertebrata</taxon>
        <taxon>Euteleostomi</taxon>
        <taxon>Mammalia</taxon>
        <taxon>Eutheria</taxon>
        <taxon>Laurasiatheria</taxon>
        <taxon>Carnivora</taxon>
        <taxon>Caniformia</taxon>
        <taxon>Ursidae</taxon>
        <taxon>Ursus</taxon>
    </lineage>
</organism>
<geneLocation type="mitochondrion"/>
<keyword id="KW-0249">Electron transport</keyword>
<keyword id="KW-0349">Heme</keyword>
<keyword id="KW-0408">Iron</keyword>
<keyword id="KW-0472">Membrane</keyword>
<keyword id="KW-0479">Metal-binding</keyword>
<keyword id="KW-0496">Mitochondrion</keyword>
<keyword id="KW-0999">Mitochondrion inner membrane</keyword>
<keyword id="KW-0679">Respiratory chain</keyword>
<keyword id="KW-0812">Transmembrane</keyword>
<keyword id="KW-1133">Transmembrane helix</keyword>
<keyword id="KW-0813">Transport</keyword>
<keyword id="KW-0830">Ubiquinone</keyword>
<accession>Q36209</accession>
<accession>Q9TGL9</accession>
<protein>
    <recommendedName>
        <fullName>Cytochrome b</fullName>
    </recommendedName>
    <alternativeName>
        <fullName>Complex III subunit 3</fullName>
    </alternativeName>
    <alternativeName>
        <fullName>Complex III subunit III</fullName>
    </alternativeName>
    <alternativeName>
        <fullName>Cytochrome b-c1 complex subunit 3</fullName>
    </alternativeName>
    <alternativeName>
        <fullName>Ubiquinol-cytochrome-c reductase complex cytochrome b subunit</fullName>
    </alternativeName>
</protein>
<sequence length="379" mass="42307">MTNIRKTHPLAKIINNSLIDLPAPSNISAWWNFGSLLGMCLILQILTGLFLAMHYTSDATTAFSSVAHICRDVHYGWIIRYMHANGASMFFICLFMHVGRGLYYGSYLLSETWNIGIILLFTVMATAFMGYVLPWGQMSFWGATVITNLLSAIPYIGTDLVEWIWGGFSVDKATLTRFFAFHFILPFIILALAAVHLLFLHETGSNNPSGIPSDSDKIPFHPYYTIKDALGALLLILALATLVLFSPDLLGDPDNYTPANPLSTPPHIKPEWYFLFAYAILRSIPNKLGGVLALIFSILILAIIPLLHTSKQRGMMFRPLSQCLFWLLVADLLTLTWIGGQPVEHPFIIIGQLASILYFTILLVLMPIAGIIENNLSKW</sequence>
<comment type="function">
    <text evidence="2">Component of the ubiquinol-cytochrome c reductase complex (complex III or cytochrome b-c1 complex) that is part of the mitochondrial respiratory chain. The b-c1 complex mediates electron transfer from ubiquinol to cytochrome c. Contributes to the generation of a proton gradient across the mitochondrial membrane that is then used for ATP synthesis.</text>
</comment>
<comment type="cofactor">
    <cofactor evidence="2">
        <name>heme b</name>
        <dbReference type="ChEBI" id="CHEBI:60344"/>
    </cofactor>
    <text evidence="2">Binds 2 heme b groups non-covalently.</text>
</comment>
<comment type="subunit">
    <text evidence="2">The cytochrome bc1 complex contains 11 subunits: 3 respiratory subunits (MT-CYB, CYC1 and UQCRFS1), 2 core proteins (UQCRC1 and UQCRC2) and 6 low-molecular weight proteins (UQCRH/QCR6, UQCRB/QCR7, UQCRQ/QCR8, UQCR10/QCR9, UQCR11/QCR10 and a cleavage product of UQCRFS1). This cytochrome bc1 complex then forms a dimer.</text>
</comment>
<comment type="subcellular location">
    <subcellularLocation>
        <location evidence="2">Mitochondrion inner membrane</location>
        <topology evidence="2">Multi-pass membrane protein</topology>
    </subcellularLocation>
</comment>
<comment type="miscellaneous">
    <text evidence="1">Heme 1 (or BL or b562) is low-potential and absorbs at about 562 nm, and heme 2 (or BH or b566) is high-potential and absorbs at about 566 nm.</text>
</comment>
<comment type="similarity">
    <text evidence="3 4">Belongs to the cytochrome b family.</text>
</comment>
<comment type="caution">
    <text evidence="2">The full-length protein contains only eight transmembrane helices, not nine as predicted by bioinformatics tools.</text>
</comment>
<proteinExistence type="inferred from homology"/>
<dbReference type="EMBL" id="U23558">
    <property type="protein sequence ID" value="AAB50502.1"/>
    <property type="molecule type" value="Genomic_DNA"/>
</dbReference>
<dbReference type="EMBL" id="AB020910">
    <property type="protein sequence ID" value="BAA77670.1"/>
    <property type="molecule type" value="Genomic_DNA"/>
</dbReference>
<dbReference type="SMR" id="Q36209"/>
<dbReference type="GO" id="GO:0005743">
    <property type="term" value="C:mitochondrial inner membrane"/>
    <property type="evidence" value="ECO:0007669"/>
    <property type="project" value="UniProtKB-SubCell"/>
</dbReference>
<dbReference type="GO" id="GO:0045275">
    <property type="term" value="C:respiratory chain complex III"/>
    <property type="evidence" value="ECO:0007669"/>
    <property type="project" value="InterPro"/>
</dbReference>
<dbReference type="GO" id="GO:0046872">
    <property type="term" value="F:metal ion binding"/>
    <property type="evidence" value="ECO:0007669"/>
    <property type="project" value="UniProtKB-KW"/>
</dbReference>
<dbReference type="GO" id="GO:0008121">
    <property type="term" value="F:ubiquinol-cytochrome-c reductase activity"/>
    <property type="evidence" value="ECO:0007669"/>
    <property type="project" value="InterPro"/>
</dbReference>
<dbReference type="GO" id="GO:0006122">
    <property type="term" value="P:mitochondrial electron transport, ubiquinol to cytochrome c"/>
    <property type="evidence" value="ECO:0007669"/>
    <property type="project" value="TreeGrafter"/>
</dbReference>
<dbReference type="CDD" id="cd00290">
    <property type="entry name" value="cytochrome_b_C"/>
    <property type="match status" value="1"/>
</dbReference>
<dbReference type="CDD" id="cd00284">
    <property type="entry name" value="Cytochrome_b_N"/>
    <property type="match status" value="1"/>
</dbReference>
<dbReference type="FunFam" id="1.20.810.10:FF:000002">
    <property type="entry name" value="Cytochrome b"/>
    <property type="match status" value="1"/>
</dbReference>
<dbReference type="Gene3D" id="1.20.810.10">
    <property type="entry name" value="Cytochrome Bc1 Complex, Chain C"/>
    <property type="match status" value="1"/>
</dbReference>
<dbReference type="InterPro" id="IPR005798">
    <property type="entry name" value="Cyt_b/b6_C"/>
</dbReference>
<dbReference type="InterPro" id="IPR036150">
    <property type="entry name" value="Cyt_b/b6_C_sf"/>
</dbReference>
<dbReference type="InterPro" id="IPR005797">
    <property type="entry name" value="Cyt_b/b6_N"/>
</dbReference>
<dbReference type="InterPro" id="IPR027387">
    <property type="entry name" value="Cytb/b6-like_sf"/>
</dbReference>
<dbReference type="InterPro" id="IPR030689">
    <property type="entry name" value="Cytochrome_b"/>
</dbReference>
<dbReference type="InterPro" id="IPR048260">
    <property type="entry name" value="Cytochrome_b_C_euk/bac"/>
</dbReference>
<dbReference type="InterPro" id="IPR048259">
    <property type="entry name" value="Cytochrome_b_N_euk/bac"/>
</dbReference>
<dbReference type="InterPro" id="IPR016174">
    <property type="entry name" value="Di-haem_cyt_TM"/>
</dbReference>
<dbReference type="PANTHER" id="PTHR19271">
    <property type="entry name" value="CYTOCHROME B"/>
    <property type="match status" value="1"/>
</dbReference>
<dbReference type="PANTHER" id="PTHR19271:SF16">
    <property type="entry name" value="CYTOCHROME B"/>
    <property type="match status" value="1"/>
</dbReference>
<dbReference type="Pfam" id="PF00032">
    <property type="entry name" value="Cytochrom_B_C"/>
    <property type="match status" value="1"/>
</dbReference>
<dbReference type="Pfam" id="PF00033">
    <property type="entry name" value="Cytochrome_B"/>
    <property type="match status" value="1"/>
</dbReference>
<dbReference type="PIRSF" id="PIRSF038885">
    <property type="entry name" value="COB"/>
    <property type="match status" value="1"/>
</dbReference>
<dbReference type="SUPFAM" id="SSF81648">
    <property type="entry name" value="a domain/subunit of cytochrome bc1 complex (Ubiquinol-cytochrome c reductase)"/>
    <property type="match status" value="1"/>
</dbReference>
<dbReference type="SUPFAM" id="SSF81342">
    <property type="entry name" value="Transmembrane di-heme cytochromes"/>
    <property type="match status" value="1"/>
</dbReference>
<dbReference type="PROSITE" id="PS51003">
    <property type="entry name" value="CYTB_CTER"/>
    <property type="match status" value="1"/>
</dbReference>
<dbReference type="PROSITE" id="PS51002">
    <property type="entry name" value="CYTB_NTER"/>
    <property type="match status" value="1"/>
</dbReference>